<accession>Q31L18</accession>
<feature type="chain" id="PRO_0000241676" description="Large ribosomal subunit protein uL24">
    <location>
        <begin position="1"/>
        <end position="113"/>
    </location>
</feature>
<keyword id="KW-1185">Reference proteome</keyword>
<keyword id="KW-0687">Ribonucleoprotein</keyword>
<keyword id="KW-0689">Ribosomal protein</keyword>
<keyword id="KW-0694">RNA-binding</keyword>
<keyword id="KW-0699">rRNA-binding</keyword>
<sequence length="113" mass="12449">MAAQKPVRHSVHVKKGDTVQVIAGKDKGTVGEVLQVFPKTSRVLVKGVNLRTKHVKPRQEGESGQIVVEEASIHSSNVQLYSTTQKVASRVAYTFTEDGRKVRKLKKTGEIID</sequence>
<reference key="1">
    <citation type="submission" date="2005-08" db="EMBL/GenBank/DDBJ databases">
        <title>Complete sequence of chromosome 1 of Synechococcus elongatus PCC 7942.</title>
        <authorList>
            <consortium name="US DOE Joint Genome Institute"/>
            <person name="Copeland A."/>
            <person name="Lucas S."/>
            <person name="Lapidus A."/>
            <person name="Barry K."/>
            <person name="Detter J.C."/>
            <person name="Glavina T."/>
            <person name="Hammon N."/>
            <person name="Israni S."/>
            <person name="Pitluck S."/>
            <person name="Schmutz J."/>
            <person name="Larimer F."/>
            <person name="Land M."/>
            <person name="Kyrpides N."/>
            <person name="Lykidis A."/>
            <person name="Golden S."/>
            <person name="Richardson P."/>
        </authorList>
    </citation>
    <scope>NUCLEOTIDE SEQUENCE [LARGE SCALE GENOMIC DNA]</scope>
    <source>
        <strain>ATCC 33912 / PCC 7942 / FACHB-805</strain>
    </source>
</reference>
<comment type="function">
    <text evidence="1">One of two assembly initiator proteins, it binds directly to the 5'-end of the 23S rRNA, where it nucleates assembly of the 50S subunit.</text>
</comment>
<comment type="function">
    <text evidence="1">One of the proteins that surrounds the polypeptide exit tunnel on the outside of the subunit.</text>
</comment>
<comment type="subunit">
    <text evidence="1">Part of the 50S ribosomal subunit.</text>
</comment>
<comment type="similarity">
    <text evidence="1">Belongs to the universal ribosomal protein uL24 family.</text>
</comment>
<organism>
    <name type="scientific">Synechococcus elongatus (strain ATCC 33912 / PCC 7942 / FACHB-805)</name>
    <name type="common">Anacystis nidulans R2</name>
    <dbReference type="NCBI Taxonomy" id="1140"/>
    <lineage>
        <taxon>Bacteria</taxon>
        <taxon>Bacillati</taxon>
        <taxon>Cyanobacteriota</taxon>
        <taxon>Cyanophyceae</taxon>
        <taxon>Synechococcales</taxon>
        <taxon>Synechococcaceae</taxon>
        <taxon>Synechococcus</taxon>
    </lineage>
</organism>
<gene>
    <name evidence="1" type="primary">rplX</name>
    <name evidence="1" type="synonym">rpl24</name>
    <name type="ordered locus">Synpcc7942_2221</name>
</gene>
<dbReference type="EMBL" id="CP000100">
    <property type="protein sequence ID" value="ABB58251.1"/>
    <property type="molecule type" value="Genomic_DNA"/>
</dbReference>
<dbReference type="RefSeq" id="WP_011244186.1">
    <property type="nucleotide sequence ID" value="NZ_JACJTX010000001.1"/>
</dbReference>
<dbReference type="SMR" id="Q31L18"/>
<dbReference type="STRING" id="1140.Synpcc7942_2221"/>
<dbReference type="PaxDb" id="1140-Synpcc7942_2221"/>
<dbReference type="GeneID" id="72431104"/>
<dbReference type="KEGG" id="syf:Synpcc7942_2221"/>
<dbReference type="eggNOG" id="COG0198">
    <property type="taxonomic scope" value="Bacteria"/>
</dbReference>
<dbReference type="HOGENOM" id="CLU_093315_2_0_3"/>
<dbReference type="OrthoDB" id="9807419at2"/>
<dbReference type="BioCyc" id="SYNEL:SYNPCC7942_2221-MONOMER"/>
<dbReference type="Proteomes" id="UP000889800">
    <property type="component" value="Chromosome"/>
</dbReference>
<dbReference type="GO" id="GO:1990904">
    <property type="term" value="C:ribonucleoprotein complex"/>
    <property type="evidence" value="ECO:0007669"/>
    <property type="project" value="UniProtKB-KW"/>
</dbReference>
<dbReference type="GO" id="GO:0005840">
    <property type="term" value="C:ribosome"/>
    <property type="evidence" value="ECO:0007669"/>
    <property type="project" value="UniProtKB-KW"/>
</dbReference>
<dbReference type="GO" id="GO:0019843">
    <property type="term" value="F:rRNA binding"/>
    <property type="evidence" value="ECO:0007669"/>
    <property type="project" value="UniProtKB-UniRule"/>
</dbReference>
<dbReference type="GO" id="GO:0003735">
    <property type="term" value="F:structural constituent of ribosome"/>
    <property type="evidence" value="ECO:0007669"/>
    <property type="project" value="InterPro"/>
</dbReference>
<dbReference type="GO" id="GO:0006412">
    <property type="term" value="P:translation"/>
    <property type="evidence" value="ECO:0007669"/>
    <property type="project" value="UniProtKB-UniRule"/>
</dbReference>
<dbReference type="CDD" id="cd06089">
    <property type="entry name" value="KOW_RPL26"/>
    <property type="match status" value="1"/>
</dbReference>
<dbReference type="FunFam" id="2.30.30.30:FF:000004">
    <property type="entry name" value="50S ribosomal protein L24"/>
    <property type="match status" value="1"/>
</dbReference>
<dbReference type="Gene3D" id="2.30.30.30">
    <property type="match status" value="1"/>
</dbReference>
<dbReference type="HAMAP" id="MF_01326_B">
    <property type="entry name" value="Ribosomal_uL24_B"/>
    <property type="match status" value="1"/>
</dbReference>
<dbReference type="InterPro" id="IPR005824">
    <property type="entry name" value="KOW"/>
</dbReference>
<dbReference type="InterPro" id="IPR014722">
    <property type="entry name" value="Rib_uL2_dom2"/>
</dbReference>
<dbReference type="InterPro" id="IPR003256">
    <property type="entry name" value="Ribosomal_uL24"/>
</dbReference>
<dbReference type="InterPro" id="IPR005825">
    <property type="entry name" value="Ribosomal_uL24_CS"/>
</dbReference>
<dbReference type="InterPro" id="IPR041988">
    <property type="entry name" value="Ribosomal_uL24_KOW"/>
</dbReference>
<dbReference type="InterPro" id="IPR008991">
    <property type="entry name" value="Translation_prot_SH3-like_sf"/>
</dbReference>
<dbReference type="NCBIfam" id="TIGR01079">
    <property type="entry name" value="rplX_bact"/>
    <property type="match status" value="1"/>
</dbReference>
<dbReference type="PANTHER" id="PTHR12903">
    <property type="entry name" value="MITOCHONDRIAL RIBOSOMAL PROTEIN L24"/>
    <property type="match status" value="1"/>
</dbReference>
<dbReference type="Pfam" id="PF00467">
    <property type="entry name" value="KOW"/>
    <property type="match status" value="1"/>
</dbReference>
<dbReference type="Pfam" id="PF17136">
    <property type="entry name" value="ribosomal_L24"/>
    <property type="match status" value="1"/>
</dbReference>
<dbReference type="SMART" id="SM00739">
    <property type="entry name" value="KOW"/>
    <property type="match status" value="1"/>
</dbReference>
<dbReference type="SUPFAM" id="SSF50104">
    <property type="entry name" value="Translation proteins SH3-like domain"/>
    <property type="match status" value="1"/>
</dbReference>
<dbReference type="PROSITE" id="PS01108">
    <property type="entry name" value="RIBOSOMAL_L24"/>
    <property type="match status" value="1"/>
</dbReference>
<protein>
    <recommendedName>
        <fullName evidence="1">Large ribosomal subunit protein uL24</fullName>
    </recommendedName>
    <alternativeName>
        <fullName evidence="2">50S ribosomal protein L24</fullName>
    </alternativeName>
</protein>
<proteinExistence type="inferred from homology"/>
<name>RL24_SYNE7</name>
<evidence type="ECO:0000255" key="1">
    <source>
        <dbReference type="HAMAP-Rule" id="MF_01326"/>
    </source>
</evidence>
<evidence type="ECO:0000305" key="2"/>